<keyword id="KW-1015">Disulfide bond</keyword>
<keyword id="KW-0325">Glycoprotein</keyword>
<keyword id="KW-0378">Hydrolase</keyword>
<keyword id="KW-0472">Membrane</keyword>
<keyword id="KW-1185">Reference proteome</keyword>
<keyword id="KW-0732">Signal</keyword>
<keyword id="KW-0812">Transmembrane</keyword>
<keyword id="KW-1133">Transmembrane helix</keyword>
<gene>
    <name evidence="6" type="primary">acp-1</name>
    <name evidence="6" type="ORF">ZK563.6</name>
</gene>
<feature type="signal peptide" evidence="2">
    <location>
        <begin position="1"/>
        <end position="18"/>
    </location>
</feature>
<feature type="chain" id="PRO_0000248567" description="Putative acid phosphatase 1">
    <location>
        <begin position="19"/>
        <end position="426"/>
    </location>
</feature>
<feature type="topological domain" description="Extracellular" evidence="2">
    <location>
        <begin position="19"/>
        <end position="388"/>
    </location>
</feature>
<feature type="transmembrane region" description="Helical" evidence="2">
    <location>
        <begin position="389"/>
        <end position="409"/>
    </location>
</feature>
<feature type="topological domain" description="Cytoplasmic" evidence="2">
    <location>
        <begin position="410"/>
        <end position="426"/>
    </location>
</feature>
<feature type="active site" description="Nucleophile" evidence="1">
    <location>
        <position position="29"/>
    </location>
</feature>
<feature type="active site" description="Proton donor" evidence="1">
    <location>
        <position position="276"/>
    </location>
</feature>
<feature type="glycosylation site" description="N-linked (GlcNAc...) asparagine" evidence="3 4">
    <location>
        <position position="37"/>
    </location>
</feature>
<feature type="glycosylation site" description="N-linked (GlcNAc...) asparagine" evidence="2">
    <location>
        <position position="145"/>
    </location>
</feature>
<feature type="disulfide bond" evidence="1">
    <location>
        <begin position="133"/>
        <end position="369"/>
    </location>
</feature>
<proteinExistence type="evidence at protein level"/>
<accession>Q23534</accession>
<reference key="1">
    <citation type="journal article" date="1998" name="Science">
        <title>Genome sequence of the nematode C. elegans: a platform for investigating biology.</title>
        <authorList>
            <consortium name="The C. elegans sequencing consortium"/>
        </authorList>
    </citation>
    <scope>NUCLEOTIDE SEQUENCE [LARGE SCALE GENOMIC DNA]</scope>
    <source>
        <strain>Bristol N2</strain>
    </source>
</reference>
<reference key="2">
    <citation type="journal article" date="2003" name="Nat. Biotechnol.">
        <title>Lectin affinity capture, isotope-coded tagging and mass spectrometry to identify N-linked glycoproteins.</title>
        <authorList>
            <person name="Kaji H."/>
            <person name="Saito H."/>
            <person name="Yamauchi Y."/>
            <person name="Shinkawa T."/>
            <person name="Taoka M."/>
            <person name="Hirabayashi J."/>
            <person name="Kasai K."/>
            <person name="Takahashi N."/>
            <person name="Isobe T."/>
        </authorList>
    </citation>
    <scope>GLYCOSYLATION [LARGE SCALE ANALYSIS] AT ASN-37</scope>
    <scope>IDENTIFICATION BY MASS SPECTROMETRY</scope>
    <source>
        <strain>Bristol N2</strain>
    </source>
</reference>
<reference key="3">
    <citation type="journal article" date="2007" name="Mol. Cell. Proteomics">
        <title>Proteomics reveals N-linked glycoprotein diversity in Caenorhabditis elegans and suggests an atypical translocation mechanism for integral membrane proteins.</title>
        <authorList>
            <person name="Kaji H."/>
            <person name="Kamiie J."/>
            <person name="Kawakami H."/>
            <person name="Kido K."/>
            <person name="Yamauchi Y."/>
            <person name="Shinkawa T."/>
            <person name="Taoka M."/>
            <person name="Takahashi N."/>
            <person name="Isobe T."/>
        </authorList>
    </citation>
    <scope>GLYCOSYLATION [LARGE SCALE ANALYSIS] AT ASN-37</scope>
    <scope>IDENTIFICATION BY MASS SPECTROMETRY</scope>
    <source>
        <strain>Bristol N2</strain>
    </source>
</reference>
<organism>
    <name type="scientific">Caenorhabditis elegans</name>
    <dbReference type="NCBI Taxonomy" id="6239"/>
    <lineage>
        <taxon>Eukaryota</taxon>
        <taxon>Metazoa</taxon>
        <taxon>Ecdysozoa</taxon>
        <taxon>Nematoda</taxon>
        <taxon>Chromadorea</taxon>
        <taxon>Rhabditida</taxon>
        <taxon>Rhabditina</taxon>
        <taxon>Rhabditomorpha</taxon>
        <taxon>Rhabditoidea</taxon>
        <taxon>Rhabditidae</taxon>
        <taxon>Peloderinae</taxon>
        <taxon>Caenorhabditis</taxon>
    </lineage>
</organism>
<dbReference type="EC" id="3.1.3.2"/>
<dbReference type="EMBL" id="FO080346">
    <property type="protein sequence ID" value="CCD63046.1"/>
    <property type="molecule type" value="Genomic_DNA"/>
</dbReference>
<dbReference type="PIR" id="T27918">
    <property type="entry name" value="T27918"/>
</dbReference>
<dbReference type="RefSeq" id="NP_508585.1">
    <property type="nucleotide sequence ID" value="NM_076184.5"/>
</dbReference>
<dbReference type="SMR" id="Q23534"/>
<dbReference type="BioGRID" id="45568">
    <property type="interactions" value="1"/>
</dbReference>
<dbReference type="IntAct" id="Q23534">
    <property type="interactions" value="1"/>
</dbReference>
<dbReference type="STRING" id="6239.ZK563.6.2"/>
<dbReference type="GlyCosmos" id="Q23534">
    <property type="glycosylation" value="2 sites, No reported glycans"/>
</dbReference>
<dbReference type="iPTMnet" id="Q23534"/>
<dbReference type="PaxDb" id="6239-ZK563.6.1"/>
<dbReference type="PeptideAtlas" id="Q23534"/>
<dbReference type="EnsemblMetazoa" id="ZK563.6.1">
    <property type="protein sequence ID" value="ZK563.6.1"/>
    <property type="gene ID" value="WBGene00022770"/>
</dbReference>
<dbReference type="GeneID" id="180627"/>
<dbReference type="KEGG" id="cel:CELE_ZK563.6"/>
<dbReference type="UCSC" id="ZK563.6.1">
    <property type="organism name" value="c. elegans"/>
</dbReference>
<dbReference type="AGR" id="WB:WBGene00022770"/>
<dbReference type="CTD" id="180627"/>
<dbReference type="WormBase" id="ZK563.6">
    <property type="protein sequence ID" value="CE28192"/>
    <property type="gene ID" value="WBGene00022770"/>
    <property type="gene designation" value="acp-1"/>
</dbReference>
<dbReference type="eggNOG" id="KOG3720">
    <property type="taxonomic scope" value="Eukaryota"/>
</dbReference>
<dbReference type="GeneTree" id="ENSGT00970000196271"/>
<dbReference type="HOGENOM" id="CLU_041834_0_0_1"/>
<dbReference type="InParanoid" id="Q23534"/>
<dbReference type="OMA" id="MFPNATP"/>
<dbReference type="OrthoDB" id="10257284at2759"/>
<dbReference type="PhylomeDB" id="Q23534"/>
<dbReference type="PRO" id="PR:Q23534"/>
<dbReference type="Proteomes" id="UP000001940">
    <property type="component" value="Chromosome X"/>
</dbReference>
<dbReference type="Bgee" id="WBGene00022770">
    <property type="expression patterns" value="Expressed in material anatomical entity and 3 other cell types or tissues"/>
</dbReference>
<dbReference type="GO" id="GO:0016020">
    <property type="term" value="C:membrane"/>
    <property type="evidence" value="ECO:0007669"/>
    <property type="project" value="UniProtKB-SubCell"/>
</dbReference>
<dbReference type="GO" id="GO:0003993">
    <property type="term" value="F:acid phosphatase activity"/>
    <property type="evidence" value="ECO:0007669"/>
    <property type="project" value="UniProtKB-EC"/>
</dbReference>
<dbReference type="GO" id="GO:0016791">
    <property type="term" value="F:phosphatase activity"/>
    <property type="evidence" value="ECO:0000318"/>
    <property type="project" value="GO_Central"/>
</dbReference>
<dbReference type="CDD" id="cd07061">
    <property type="entry name" value="HP_HAP_like"/>
    <property type="match status" value="1"/>
</dbReference>
<dbReference type="Gene3D" id="3.40.50.1240">
    <property type="entry name" value="Phosphoglycerate mutase-like"/>
    <property type="match status" value="1"/>
</dbReference>
<dbReference type="InterPro" id="IPR033379">
    <property type="entry name" value="Acid_Pase_AS"/>
</dbReference>
<dbReference type="InterPro" id="IPR000560">
    <property type="entry name" value="His_Pase_clade-2"/>
</dbReference>
<dbReference type="InterPro" id="IPR029033">
    <property type="entry name" value="His_PPase_superfam"/>
</dbReference>
<dbReference type="InterPro" id="IPR050645">
    <property type="entry name" value="Histidine_acid_phosphatase"/>
</dbReference>
<dbReference type="PANTHER" id="PTHR11567">
    <property type="entry name" value="ACID PHOSPHATASE-RELATED"/>
    <property type="match status" value="1"/>
</dbReference>
<dbReference type="PANTHER" id="PTHR11567:SF211">
    <property type="entry name" value="PROSTATIC ACID PHOSPHATASE"/>
    <property type="match status" value="1"/>
</dbReference>
<dbReference type="Pfam" id="PF00328">
    <property type="entry name" value="His_Phos_2"/>
    <property type="match status" value="1"/>
</dbReference>
<dbReference type="SUPFAM" id="SSF53254">
    <property type="entry name" value="Phosphoglycerate mutase-like"/>
    <property type="match status" value="1"/>
</dbReference>
<dbReference type="PROSITE" id="PS00616">
    <property type="entry name" value="HIS_ACID_PHOSPHAT_1"/>
    <property type="match status" value="1"/>
</dbReference>
<comment type="catalytic activity">
    <reaction>
        <text>a phosphate monoester + H2O = an alcohol + phosphate</text>
        <dbReference type="Rhea" id="RHEA:15017"/>
        <dbReference type="ChEBI" id="CHEBI:15377"/>
        <dbReference type="ChEBI" id="CHEBI:30879"/>
        <dbReference type="ChEBI" id="CHEBI:43474"/>
        <dbReference type="ChEBI" id="CHEBI:67140"/>
        <dbReference type="EC" id="3.1.3.2"/>
    </reaction>
</comment>
<comment type="subcellular location">
    <subcellularLocation>
        <location evidence="5">Membrane</location>
        <topology evidence="5">Single-pass type I membrane protein</topology>
    </subcellularLocation>
</comment>
<comment type="similarity">
    <text evidence="5">Belongs to the histidine acid phosphatase family.</text>
</comment>
<evidence type="ECO:0000250" key="1"/>
<evidence type="ECO:0000255" key="2"/>
<evidence type="ECO:0000269" key="3">
    <source>
    </source>
</evidence>
<evidence type="ECO:0000269" key="4">
    <source>
    </source>
</evidence>
<evidence type="ECO:0000305" key="5"/>
<evidence type="ECO:0000312" key="6">
    <source>
        <dbReference type="WormBase" id="ZK563.6"/>
    </source>
</evidence>
<sequence>MRVLFYVSILVIIASVHTQLISVHVIFRHGARAPVLNVTSEEAKSYFYRGLGQLTDEGFEQARLMGKVLRDRYVNSFVDARMLSSQLLFRSSPVERCLMTLQTVGNTMFPNATPPVQTVAKPDDFLLVPKLDCDFQLGEWDNYFNLTESDKKMARKNPWFVSDKALRKAVTKTDFLQDRGGENLPALILEKEAGLAVPSWFNEGAYKESLHVFYSALAVMSSVGEYKSSKGIRIKSGLLMEKVFNDIQEKVRCHEKKEVSNIKCDIHKLQVFSSHDLLILPILETLGIREEVLGKDMPPEFMSTIIIETMIVDNSPVVKVLFRKNPREITLRDVTGFVKNCPPGQPLCPVQRFTSCCNEFITSDPKSECYAETTVEKQSEWVMTPLSWIIVAIAILLLIALILMTYFVIRYKNRSIVNIKKLSLEN</sequence>
<protein>
    <recommendedName>
        <fullName>Putative acid phosphatase 1</fullName>
        <ecNumber>3.1.3.2</ecNumber>
    </recommendedName>
</protein>
<name>ACP1_CAEEL</name>